<accession>B7JV38</accession>
<name>CHLB_RIPO1</name>
<dbReference type="EC" id="1.3.7.7" evidence="1"/>
<dbReference type="EMBL" id="CP001287">
    <property type="protein sequence ID" value="ACK66890.1"/>
    <property type="molecule type" value="Genomic_DNA"/>
</dbReference>
<dbReference type="RefSeq" id="WP_012596156.1">
    <property type="nucleotide sequence ID" value="NC_011726.1"/>
</dbReference>
<dbReference type="SMR" id="B7JV38"/>
<dbReference type="STRING" id="41431.PCC8801_2892"/>
<dbReference type="KEGG" id="cyp:PCC8801_2892"/>
<dbReference type="eggNOG" id="COG2710">
    <property type="taxonomic scope" value="Bacteria"/>
</dbReference>
<dbReference type="HOGENOM" id="CLU_025470_0_0_3"/>
<dbReference type="OrthoDB" id="5717231at2"/>
<dbReference type="UniPathway" id="UPA00670"/>
<dbReference type="Proteomes" id="UP000008204">
    <property type="component" value="Chromosome"/>
</dbReference>
<dbReference type="GO" id="GO:0051539">
    <property type="term" value="F:4 iron, 4 sulfur cluster binding"/>
    <property type="evidence" value="ECO:0007669"/>
    <property type="project" value="UniProtKB-UniRule"/>
</dbReference>
<dbReference type="GO" id="GO:0005524">
    <property type="term" value="F:ATP binding"/>
    <property type="evidence" value="ECO:0007669"/>
    <property type="project" value="UniProtKB-UniRule"/>
</dbReference>
<dbReference type="GO" id="GO:0046872">
    <property type="term" value="F:metal ion binding"/>
    <property type="evidence" value="ECO:0007669"/>
    <property type="project" value="UniProtKB-KW"/>
</dbReference>
<dbReference type="GO" id="GO:0016730">
    <property type="term" value="F:oxidoreductase activity, acting on iron-sulfur proteins as donors"/>
    <property type="evidence" value="ECO:0007669"/>
    <property type="project" value="InterPro"/>
</dbReference>
<dbReference type="GO" id="GO:0016636">
    <property type="term" value="F:oxidoreductase activity, acting on the CH-CH group of donors, iron-sulfur protein as acceptor"/>
    <property type="evidence" value="ECO:0007669"/>
    <property type="project" value="UniProtKB-UniRule"/>
</dbReference>
<dbReference type="GO" id="GO:0036068">
    <property type="term" value="P:light-independent chlorophyll biosynthetic process"/>
    <property type="evidence" value="ECO:0007669"/>
    <property type="project" value="UniProtKB-UniRule"/>
</dbReference>
<dbReference type="GO" id="GO:0019685">
    <property type="term" value="P:photosynthesis, dark reaction"/>
    <property type="evidence" value="ECO:0007669"/>
    <property type="project" value="InterPro"/>
</dbReference>
<dbReference type="CDD" id="cd01981">
    <property type="entry name" value="Pchlide_reductase_B"/>
    <property type="match status" value="1"/>
</dbReference>
<dbReference type="Gene3D" id="1.20.89.20">
    <property type="match status" value="1"/>
</dbReference>
<dbReference type="Gene3D" id="3.40.50.1980">
    <property type="entry name" value="Nitrogenase molybdenum iron protein domain"/>
    <property type="match status" value="3"/>
</dbReference>
<dbReference type="Gene3D" id="1.10.8.550">
    <property type="entry name" value="Proto-chlorophyllide reductase 57 kD subunit B"/>
    <property type="match status" value="1"/>
</dbReference>
<dbReference type="HAMAP" id="MF_00353">
    <property type="entry name" value="ChlB_BchB"/>
    <property type="match status" value="1"/>
</dbReference>
<dbReference type="InterPro" id="IPR050152">
    <property type="entry name" value="ChlB/BchB/BchZ"/>
</dbReference>
<dbReference type="InterPro" id="IPR013580">
    <property type="entry name" value="LI-POR_suB-like_C"/>
</dbReference>
<dbReference type="InterPro" id="IPR000510">
    <property type="entry name" value="Nase/OxRdtase_comp1"/>
</dbReference>
<dbReference type="InterPro" id="IPR042298">
    <property type="entry name" value="P-CP_red_C"/>
</dbReference>
<dbReference type="InterPro" id="IPR005969">
    <property type="entry name" value="Protochl_reductB"/>
</dbReference>
<dbReference type="InterPro" id="IPR016209">
    <property type="entry name" value="Protochlorophyllide_Rdtase"/>
</dbReference>
<dbReference type="NCBIfam" id="TIGR01278">
    <property type="entry name" value="DPOR_BchB"/>
    <property type="match status" value="1"/>
</dbReference>
<dbReference type="PANTHER" id="PTHR33712">
    <property type="entry name" value="LIGHT-INDEPENDENT PROTOCHLOROPHYLLIDE REDUCTASE SUBUNIT B"/>
    <property type="match status" value="1"/>
</dbReference>
<dbReference type="PANTHER" id="PTHR33712:SF7">
    <property type="entry name" value="LIGHT-INDEPENDENT PROTOCHLOROPHYLLIDE REDUCTASE SUBUNIT B"/>
    <property type="match status" value="1"/>
</dbReference>
<dbReference type="Pfam" id="PF00148">
    <property type="entry name" value="Oxidored_nitro"/>
    <property type="match status" value="1"/>
</dbReference>
<dbReference type="Pfam" id="PF08369">
    <property type="entry name" value="PCP_red"/>
    <property type="match status" value="1"/>
</dbReference>
<dbReference type="PIRSF" id="PIRSF000163">
    <property type="entry name" value="PCP_ChlB"/>
    <property type="match status" value="1"/>
</dbReference>
<dbReference type="SUPFAM" id="SSF53807">
    <property type="entry name" value="Helical backbone' metal receptor"/>
    <property type="match status" value="1"/>
</dbReference>
<proteinExistence type="inferred from homology"/>
<evidence type="ECO:0000255" key="1">
    <source>
        <dbReference type="HAMAP-Rule" id="MF_00353"/>
    </source>
</evidence>
<sequence length="508" mass="56880">MKLAYWMYAGPAHIGTLRIASSFKNVHAIMHAPLGDDYFNVMRSMLERERDFTPVTASIVDRNVLARGSQEKVVDNIVRKDGEENPDLIVLTPTCTSSILQEDLANFVDRAQMDAKGDVMLADVNHYRYNELQAADRTLHQIVKFYLEKAQKKGELPQRKTEKPSVNIIGISTLGFHNQHDCTELKRLMADLGIEVNEVIPEGASVHNLKNLPKAWFNLVPYRELGLATAGYLEEQFGMSYVDITPMGVVETARCIRKIQQLINAQGAEVDYEEFIKEQTLYVSQAAWFSRSIDCQNLTGKKAVVFGDNTHAAAITKILAREMGIHVVLAGTYCKYDADWFREQVSEYCDEVLISDDNAAIGDAIARLEPSAIFGTQMERHVGKRLDIPCGVIASPIHIQNFPIGYKPFCGYEGTNQITDLIYNSFTLGMEDHLLEIFGGHDTKEVITKGISADSDLNWNKEAQAELNKVPGFVRGKVKRNTEKFARERGFSVITLEVMYAAKEAVGA</sequence>
<reference key="1">
    <citation type="journal article" date="2011" name="MBio">
        <title>Novel metabolic attributes of the genus Cyanothece, comprising a group of unicellular nitrogen-fixing Cyanobacteria.</title>
        <authorList>
            <person name="Bandyopadhyay A."/>
            <person name="Elvitigala T."/>
            <person name="Welsh E."/>
            <person name="Stockel J."/>
            <person name="Liberton M."/>
            <person name="Min H."/>
            <person name="Sherman L.A."/>
            <person name="Pakrasi H.B."/>
        </authorList>
    </citation>
    <scope>NUCLEOTIDE SEQUENCE [LARGE SCALE GENOMIC DNA]</scope>
    <source>
        <strain>PCC 8801 / RF-1</strain>
    </source>
</reference>
<keyword id="KW-0004">4Fe-4S</keyword>
<keyword id="KW-0067">ATP-binding</keyword>
<keyword id="KW-0149">Chlorophyll biosynthesis</keyword>
<keyword id="KW-0408">Iron</keyword>
<keyword id="KW-0411">Iron-sulfur</keyword>
<keyword id="KW-0479">Metal-binding</keyword>
<keyword id="KW-0547">Nucleotide-binding</keyword>
<keyword id="KW-0560">Oxidoreductase</keyword>
<keyword id="KW-0602">Photosynthesis</keyword>
<keyword id="KW-1185">Reference proteome</keyword>
<gene>
    <name evidence="1" type="primary">chlB</name>
    <name type="ordered locus">PCC8801_2892</name>
</gene>
<protein>
    <recommendedName>
        <fullName evidence="1">Light-independent protochlorophyllide reductase subunit B</fullName>
        <shortName evidence="1">DPOR subunit B</shortName>
        <shortName evidence="1">LI-POR subunit B</shortName>
        <ecNumber evidence="1">1.3.7.7</ecNumber>
    </recommendedName>
</protein>
<comment type="function">
    <text evidence="1">Component of the dark-operative protochlorophyllide reductase (DPOR) that uses Mg-ATP and reduced ferredoxin to reduce ring D of protochlorophyllide (Pchlide) to form chlorophyllide a (Chlide). This reaction is light-independent. The NB-protein (ChlN-ChlB) is the catalytic component of the complex.</text>
</comment>
<comment type="catalytic activity">
    <reaction evidence="1">
        <text>chlorophyllide a + oxidized 2[4Fe-4S]-[ferredoxin] + 2 ADP + 2 phosphate = protochlorophyllide a + reduced 2[4Fe-4S]-[ferredoxin] + 2 ATP + 2 H2O</text>
        <dbReference type="Rhea" id="RHEA:28202"/>
        <dbReference type="Rhea" id="RHEA-COMP:10002"/>
        <dbReference type="Rhea" id="RHEA-COMP:10004"/>
        <dbReference type="ChEBI" id="CHEBI:15377"/>
        <dbReference type="ChEBI" id="CHEBI:30616"/>
        <dbReference type="ChEBI" id="CHEBI:33722"/>
        <dbReference type="ChEBI" id="CHEBI:33723"/>
        <dbReference type="ChEBI" id="CHEBI:43474"/>
        <dbReference type="ChEBI" id="CHEBI:83348"/>
        <dbReference type="ChEBI" id="CHEBI:83350"/>
        <dbReference type="ChEBI" id="CHEBI:456216"/>
        <dbReference type="EC" id="1.3.7.7"/>
    </reaction>
</comment>
<comment type="cofactor">
    <cofactor evidence="1">
        <name>[4Fe-4S] cluster</name>
        <dbReference type="ChEBI" id="CHEBI:49883"/>
    </cofactor>
    <text evidence="1">Binds 1 [4Fe-4S] cluster per heterodimer. The cluster is bound at the heterodimer interface by residues from both subunits.</text>
</comment>
<comment type="pathway">
    <text evidence="1">Porphyrin-containing compound metabolism; chlorophyll biosynthesis (light-independent).</text>
</comment>
<comment type="subunit">
    <text evidence="1">Protochlorophyllide reductase is composed of three subunits; ChlL, ChlN and ChlB. Forms a heterotetramer of two ChlB and two ChlN subunits.</text>
</comment>
<comment type="similarity">
    <text evidence="1">Belongs to the ChlB/BchB/BchZ family.</text>
</comment>
<organism>
    <name type="scientific">Rippkaea orientalis (strain PCC 8801 / RF-1)</name>
    <name type="common">Cyanothece sp. (strain PCC 8801)</name>
    <dbReference type="NCBI Taxonomy" id="41431"/>
    <lineage>
        <taxon>Bacteria</taxon>
        <taxon>Bacillati</taxon>
        <taxon>Cyanobacteriota</taxon>
        <taxon>Cyanophyceae</taxon>
        <taxon>Oscillatoriophycideae</taxon>
        <taxon>Chroococcales</taxon>
        <taxon>Aphanothecaceae</taxon>
        <taxon>Rippkaea</taxon>
        <taxon>Rippkaea orientalis</taxon>
    </lineage>
</organism>
<feature type="chain" id="PRO_1000120528" description="Light-independent protochlorophyllide reductase subunit B">
    <location>
        <begin position="1"/>
        <end position="508"/>
    </location>
</feature>
<feature type="active site" description="Proton donor" evidence="1">
    <location>
        <position position="294"/>
    </location>
</feature>
<feature type="binding site" evidence="1">
    <location>
        <position position="36"/>
    </location>
    <ligand>
        <name>[4Fe-4S] cluster</name>
        <dbReference type="ChEBI" id="CHEBI:49883"/>
        <note>ligand shared with heterodimeric partner</note>
    </ligand>
</feature>
<feature type="binding site" evidence="1">
    <location>
        <begin position="429"/>
        <end position="430"/>
    </location>
    <ligand>
        <name>substrate</name>
    </ligand>
</feature>